<reference key="1">
    <citation type="journal article" date="1999" name="J. Bacteriol.">
        <title>Sequence and organization of pXO1, the large Bacillus anthracis plasmid harboring the anthrax toxin genes.</title>
        <authorList>
            <person name="Okinaka R.T."/>
            <person name="Cloud K."/>
            <person name="Hampton O."/>
            <person name="Hoffmaster A.R."/>
            <person name="Hill K.K."/>
            <person name="Keim P."/>
            <person name="Koehler T.M."/>
            <person name="Lamke G."/>
            <person name="Kumano S."/>
            <person name="Mahillon J."/>
            <person name="Manter D."/>
            <person name="Martinez Y."/>
            <person name="Ricke D."/>
            <person name="Svensson R."/>
            <person name="Jackson P.J."/>
        </authorList>
    </citation>
    <scope>NUCLEOTIDE SEQUENCE [LARGE SCALE GENOMIC DNA]</scope>
    <source>
        <strain>Sterne</strain>
    </source>
</reference>
<reference key="2">
    <citation type="journal article" date="2002" name="Science">
        <title>Comparative genome sequencing for discovery of novel polymorphisms in Bacillus anthracis.</title>
        <authorList>
            <person name="Read T.D."/>
            <person name="Salzberg S.L."/>
            <person name="Pop M."/>
            <person name="Shumway M.F."/>
            <person name="Umayam L."/>
            <person name="Jiang L."/>
            <person name="Holtzapple E."/>
            <person name="Busch J.D."/>
            <person name="Smith K.L."/>
            <person name="Schupp J.M."/>
            <person name="Solomon D."/>
            <person name="Keim P."/>
            <person name="Fraser C.M."/>
        </authorList>
    </citation>
    <scope>NUCLEOTIDE SEQUENCE [GENOMIC DNA]</scope>
    <source>
        <strain>Ames / isolate Florida / A2012</strain>
    </source>
</reference>
<reference key="3">
    <citation type="journal article" date="2009" name="J. Bacteriol.">
        <title>The complete genome sequence of Bacillus anthracis Ames 'Ancestor'.</title>
        <authorList>
            <person name="Ravel J."/>
            <person name="Jiang L."/>
            <person name="Stanley S.T."/>
            <person name="Wilson M.R."/>
            <person name="Decker R.S."/>
            <person name="Read T.D."/>
            <person name="Worsham P."/>
            <person name="Keim P.S."/>
            <person name="Salzberg S.L."/>
            <person name="Fraser-Liggett C.M."/>
            <person name="Rasko D.A."/>
        </authorList>
    </citation>
    <scope>NUCLEOTIDE SEQUENCE [LARGE SCALE GENOMIC DNA]</scope>
    <source>
        <strain>Ames ancestor</strain>
    </source>
</reference>
<keyword id="KW-0614">Plasmid</keyword>
<keyword id="KW-1185">Reference proteome</keyword>
<sequence>MSTILVLGGSNGRTLEKLAKKRDCQVIFHDGKNHGGVKKTFRSVIKKCDVIVIQKGACGHVSIDVAKEYAKKYDVPLLFNQGFGGTGALEMGLKHLKAA</sequence>
<geneLocation type="plasmid">
    <name>pXO1</name>
</geneLocation>
<name>Y6114_BACAN</name>
<dbReference type="EMBL" id="AF065404">
    <property type="protein sequence ID" value="AAD32388.1"/>
    <property type="status" value="ALT_INIT"/>
    <property type="molecule type" value="Genomic_DNA"/>
</dbReference>
<dbReference type="EMBL" id="AE011190">
    <property type="protein sequence ID" value="AAM26067.1"/>
    <property type="molecule type" value="Genomic_DNA"/>
</dbReference>
<dbReference type="EMBL" id="AE017336">
    <property type="protein sequence ID" value="AAT28855.2"/>
    <property type="molecule type" value="Genomic_DNA"/>
</dbReference>
<dbReference type="PIR" id="D59101">
    <property type="entry name" value="D59101"/>
</dbReference>
<dbReference type="RefSeq" id="NP_052780.1">
    <property type="nucleotide sequence ID" value="NC_001496.1"/>
</dbReference>
<dbReference type="KEGG" id="banh:HYU01_28535"/>
<dbReference type="KEGG" id="bar:GBAA_pXO1_0114"/>
<dbReference type="HOGENOM" id="CLU_163819_0_0_9"/>
<dbReference type="OMA" id="MVKEICK"/>
<dbReference type="Proteomes" id="UP000000594">
    <property type="component" value="Plasmid pXO1"/>
</dbReference>
<dbReference type="InterPro" id="IPR016772">
    <property type="entry name" value="UCP020408"/>
</dbReference>
<dbReference type="Pfam" id="PF10087">
    <property type="entry name" value="DUF2325"/>
    <property type="match status" value="1"/>
</dbReference>
<comment type="similarity">
    <text evidence="1">Belongs to the UPF0751 family.</text>
</comment>
<comment type="sequence caution" evidence="1">
    <conflict type="erroneous initiation">
        <sequence resource="EMBL-CDS" id="AAD32388"/>
    </conflict>
</comment>
<protein>
    <recommendedName>
        <fullName>UPF0751 protein pXO1-84/BXA0114/GBAA_pXO1_0114</fullName>
    </recommendedName>
</protein>
<proteinExistence type="inferred from homology"/>
<feature type="chain" id="PRO_0000383578" description="UPF0751 protein pXO1-84/BXA0114/GBAA_pXO1_0114">
    <location>
        <begin position="1"/>
        <end position="99"/>
    </location>
</feature>
<organism>
    <name type="scientific">Bacillus anthracis</name>
    <dbReference type="NCBI Taxonomy" id="1392"/>
    <lineage>
        <taxon>Bacteria</taxon>
        <taxon>Bacillati</taxon>
        <taxon>Bacillota</taxon>
        <taxon>Bacilli</taxon>
        <taxon>Bacillales</taxon>
        <taxon>Bacillaceae</taxon>
        <taxon>Bacillus</taxon>
        <taxon>Bacillus cereus group</taxon>
    </lineage>
</organism>
<evidence type="ECO:0000305" key="1"/>
<gene>
    <name type="ordered locus">pXO1-84</name>
    <name type="ordered locus">BXA0114</name>
    <name type="ordered locus">GBAA_pXO1_0114</name>
</gene>
<accession>Q6EZQ4</accession>
<accession>Q8KYM6</accession>
<accession>Q9X354</accession>